<evidence type="ECO:0000250" key="1"/>
<evidence type="ECO:0000255" key="2"/>
<evidence type="ECO:0000256" key="3">
    <source>
        <dbReference type="SAM" id="MobiDB-lite"/>
    </source>
</evidence>
<evidence type="ECO:0000305" key="4"/>
<proteinExistence type="inferred from homology"/>
<gene>
    <name type="primary">exgD</name>
    <name type="ORF">An11g07660</name>
</gene>
<dbReference type="EC" id="3.2.1.58"/>
<dbReference type="EMBL" id="AM270244">
    <property type="protein sequence ID" value="CAK45960.1"/>
    <property type="molecule type" value="Genomic_DNA"/>
</dbReference>
<dbReference type="RefSeq" id="XP_001394735.1">
    <property type="nucleotide sequence ID" value="XM_001394698.1"/>
</dbReference>
<dbReference type="SMR" id="A2QX52"/>
<dbReference type="CAZy" id="GH5">
    <property type="family name" value="Glycoside Hydrolase Family 5"/>
</dbReference>
<dbReference type="GlyCosmos" id="A2QX52">
    <property type="glycosylation" value="10 sites, No reported glycans"/>
</dbReference>
<dbReference type="EnsemblFungi" id="CAK45960">
    <property type="protein sequence ID" value="CAK45960"/>
    <property type="gene ID" value="An11g07660"/>
</dbReference>
<dbReference type="GeneID" id="4984985"/>
<dbReference type="KEGG" id="ang:An11g07660"/>
<dbReference type="VEuPathDB" id="FungiDB:An11g07660"/>
<dbReference type="HOGENOM" id="CLU_004624_4_0_1"/>
<dbReference type="Proteomes" id="UP000006706">
    <property type="component" value="Chromosome 7R"/>
</dbReference>
<dbReference type="GO" id="GO:0009986">
    <property type="term" value="C:cell surface"/>
    <property type="evidence" value="ECO:0007669"/>
    <property type="project" value="TreeGrafter"/>
</dbReference>
<dbReference type="GO" id="GO:0005576">
    <property type="term" value="C:extracellular region"/>
    <property type="evidence" value="ECO:0007669"/>
    <property type="project" value="TreeGrafter"/>
</dbReference>
<dbReference type="GO" id="GO:0005886">
    <property type="term" value="C:plasma membrane"/>
    <property type="evidence" value="ECO:0007669"/>
    <property type="project" value="UniProtKB-SubCell"/>
</dbReference>
<dbReference type="GO" id="GO:0004338">
    <property type="term" value="F:glucan exo-1,3-beta-glucosidase activity"/>
    <property type="evidence" value="ECO:0007669"/>
    <property type="project" value="UniProtKB-EC"/>
</dbReference>
<dbReference type="GO" id="GO:0071555">
    <property type="term" value="P:cell wall organization"/>
    <property type="evidence" value="ECO:0007669"/>
    <property type="project" value="UniProtKB-KW"/>
</dbReference>
<dbReference type="GO" id="GO:0009251">
    <property type="term" value="P:glucan catabolic process"/>
    <property type="evidence" value="ECO:0007669"/>
    <property type="project" value="TreeGrafter"/>
</dbReference>
<dbReference type="FunFam" id="3.20.20.80:FF:000033">
    <property type="entry name" value="Glucan 1,3-beta-glucosidase A"/>
    <property type="match status" value="1"/>
</dbReference>
<dbReference type="Gene3D" id="3.20.20.80">
    <property type="entry name" value="Glycosidases"/>
    <property type="match status" value="1"/>
</dbReference>
<dbReference type="InterPro" id="IPR001547">
    <property type="entry name" value="Glyco_hydro_5"/>
</dbReference>
<dbReference type="InterPro" id="IPR017853">
    <property type="entry name" value="Glycoside_hydrolase_SF"/>
</dbReference>
<dbReference type="InterPro" id="IPR050386">
    <property type="entry name" value="Glycosyl_hydrolase_5"/>
</dbReference>
<dbReference type="PANTHER" id="PTHR31297:SF34">
    <property type="entry name" value="GLUCAN 1,3-BETA-GLUCOSIDASE 2"/>
    <property type="match status" value="1"/>
</dbReference>
<dbReference type="PANTHER" id="PTHR31297">
    <property type="entry name" value="GLUCAN ENDO-1,6-BETA-GLUCOSIDASE B"/>
    <property type="match status" value="1"/>
</dbReference>
<dbReference type="Pfam" id="PF00150">
    <property type="entry name" value="Cellulase"/>
    <property type="match status" value="1"/>
</dbReference>
<dbReference type="SUPFAM" id="SSF51445">
    <property type="entry name" value="(Trans)glycosidases"/>
    <property type="match status" value="1"/>
</dbReference>
<feature type="chain" id="PRO_0000395165" description="Probable glucan 1,3-beta-glucosidase D">
    <location>
        <begin position="1"/>
        <end position="830"/>
    </location>
</feature>
<feature type="topological domain" description="Cytoplasmic" evidence="2">
    <location>
        <begin position="1"/>
        <end position="307"/>
    </location>
</feature>
<feature type="transmembrane region" description="Helical; Signal-anchor for type II membrane protein" evidence="2">
    <location>
        <begin position="308"/>
        <end position="328"/>
    </location>
</feature>
<feature type="topological domain" description="Extracellular" evidence="2">
    <location>
        <begin position="329"/>
        <end position="830"/>
    </location>
</feature>
<feature type="region of interest" description="Disordered" evidence="3">
    <location>
        <begin position="1"/>
        <end position="91"/>
    </location>
</feature>
<feature type="region of interest" description="Disordered" evidence="3">
    <location>
        <begin position="127"/>
        <end position="163"/>
    </location>
</feature>
<feature type="region of interest" description="Disordered" evidence="3">
    <location>
        <begin position="260"/>
        <end position="297"/>
    </location>
</feature>
<feature type="compositionally biased region" description="Basic and acidic residues" evidence="3">
    <location>
        <begin position="1"/>
        <end position="11"/>
    </location>
</feature>
<feature type="compositionally biased region" description="Basic and acidic residues" evidence="3">
    <location>
        <begin position="74"/>
        <end position="84"/>
    </location>
</feature>
<feature type="compositionally biased region" description="Basic residues" evidence="3">
    <location>
        <begin position="147"/>
        <end position="163"/>
    </location>
</feature>
<feature type="active site" description="Proton donor" evidence="1">
    <location>
        <position position="597"/>
    </location>
</feature>
<feature type="active site" description="Nucleophile" evidence="1">
    <location>
        <position position="702"/>
    </location>
</feature>
<feature type="glycosylation site" description="N-linked (GlcNAc...) asparagine" evidence="2">
    <location>
        <position position="341"/>
    </location>
</feature>
<feature type="glycosylation site" description="N-linked (GlcNAc...) asparagine" evidence="2">
    <location>
        <position position="376"/>
    </location>
</feature>
<feature type="glycosylation site" description="N-linked (GlcNAc...) asparagine" evidence="2">
    <location>
        <position position="381"/>
    </location>
</feature>
<feature type="glycosylation site" description="N-linked (GlcNAc...) asparagine" evidence="2">
    <location>
        <position position="393"/>
    </location>
</feature>
<feature type="glycosylation site" description="N-linked (GlcNAc...) asparagine" evidence="2">
    <location>
        <position position="397"/>
    </location>
</feature>
<feature type="glycosylation site" description="N-linked (GlcNAc...) asparagine" evidence="2">
    <location>
        <position position="546"/>
    </location>
</feature>
<feature type="glycosylation site" description="N-linked (GlcNAc...) asparagine" evidence="2">
    <location>
        <position position="558"/>
    </location>
</feature>
<feature type="glycosylation site" description="N-linked (GlcNAc...) asparagine" evidence="2">
    <location>
        <position position="610"/>
    </location>
</feature>
<feature type="glycosylation site" description="N-linked (GlcNAc...) asparagine" evidence="2">
    <location>
        <position position="669"/>
    </location>
</feature>
<feature type="glycosylation site" description="N-linked (GlcNAc...) asparagine" evidence="2">
    <location>
        <position position="689"/>
    </location>
</feature>
<comment type="function">
    <text evidence="1">Glucosidase involved in the degradation of cellulosic biomass. Active on lichenan (By similarity).</text>
</comment>
<comment type="catalytic activity">
    <reaction>
        <text>Successive hydrolysis of beta-D-glucose units from the non-reducing ends of (1-&gt;3)-beta-D-glucans, releasing alpha-glucose.</text>
        <dbReference type="EC" id="3.2.1.58"/>
    </reaction>
</comment>
<comment type="subcellular location">
    <subcellularLocation>
        <location evidence="4">Cell membrane</location>
        <topology evidence="4">Single-pass type II membrane protein</topology>
    </subcellularLocation>
</comment>
<comment type="similarity">
    <text evidence="4">Belongs to the glycosyl hydrolase 5 (cellulase A) family.</text>
</comment>
<reference key="1">
    <citation type="journal article" date="2007" name="Nat. Biotechnol.">
        <title>Genome sequencing and analysis of the versatile cell factory Aspergillus niger CBS 513.88.</title>
        <authorList>
            <person name="Pel H.J."/>
            <person name="de Winde J.H."/>
            <person name="Archer D.B."/>
            <person name="Dyer P.S."/>
            <person name="Hofmann G."/>
            <person name="Schaap P.J."/>
            <person name="Turner G."/>
            <person name="de Vries R.P."/>
            <person name="Albang R."/>
            <person name="Albermann K."/>
            <person name="Andersen M.R."/>
            <person name="Bendtsen J.D."/>
            <person name="Benen J.A.E."/>
            <person name="van den Berg M."/>
            <person name="Breestraat S."/>
            <person name="Caddick M.X."/>
            <person name="Contreras R."/>
            <person name="Cornell M."/>
            <person name="Coutinho P.M."/>
            <person name="Danchin E.G.J."/>
            <person name="Debets A.J.M."/>
            <person name="Dekker P."/>
            <person name="van Dijck P.W.M."/>
            <person name="van Dijk A."/>
            <person name="Dijkhuizen L."/>
            <person name="Driessen A.J.M."/>
            <person name="d'Enfert C."/>
            <person name="Geysens S."/>
            <person name="Goosen C."/>
            <person name="Groot G.S.P."/>
            <person name="de Groot P.W.J."/>
            <person name="Guillemette T."/>
            <person name="Henrissat B."/>
            <person name="Herweijer M."/>
            <person name="van den Hombergh J.P.T.W."/>
            <person name="van den Hondel C.A.M.J.J."/>
            <person name="van der Heijden R.T.J.M."/>
            <person name="van der Kaaij R.M."/>
            <person name="Klis F.M."/>
            <person name="Kools H.J."/>
            <person name="Kubicek C.P."/>
            <person name="van Kuyk P.A."/>
            <person name="Lauber J."/>
            <person name="Lu X."/>
            <person name="van der Maarel M.J.E.C."/>
            <person name="Meulenberg R."/>
            <person name="Menke H."/>
            <person name="Mortimer M.A."/>
            <person name="Nielsen J."/>
            <person name="Oliver S.G."/>
            <person name="Olsthoorn M."/>
            <person name="Pal K."/>
            <person name="van Peij N.N.M.E."/>
            <person name="Ram A.F.J."/>
            <person name="Rinas U."/>
            <person name="Roubos J.A."/>
            <person name="Sagt C.M.J."/>
            <person name="Schmoll M."/>
            <person name="Sun J."/>
            <person name="Ussery D."/>
            <person name="Varga J."/>
            <person name="Vervecken W."/>
            <person name="van de Vondervoort P.J.J."/>
            <person name="Wedler H."/>
            <person name="Woesten H.A.B."/>
            <person name="Zeng A.-P."/>
            <person name="van Ooyen A.J.J."/>
            <person name="Visser J."/>
            <person name="Stam H."/>
        </authorList>
    </citation>
    <scope>NUCLEOTIDE SEQUENCE [LARGE SCALE GENOMIC DNA]</scope>
    <source>
        <strain>ATCC MYA-4892 / CBS 513.88 / FGSC A1513</strain>
    </source>
</reference>
<keyword id="KW-0119">Carbohydrate metabolism</keyword>
<keyword id="KW-1003">Cell membrane</keyword>
<keyword id="KW-0961">Cell wall biogenesis/degradation</keyword>
<keyword id="KW-0325">Glycoprotein</keyword>
<keyword id="KW-0326">Glycosidase</keyword>
<keyword id="KW-0378">Hydrolase</keyword>
<keyword id="KW-0472">Membrane</keyword>
<keyword id="KW-0624">Polysaccharide degradation</keyword>
<keyword id="KW-1185">Reference proteome</keyword>
<keyword id="KW-0735">Signal-anchor</keyword>
<keyword id="KW-0812">Transmembrane</keyword>
<keyword id="KW-1133">Transmembrane helix</keyword>
<protein>
    <recommendedName>
        <fullName>Probable glucan 1,3-beta-glucosidase D</fullName>
        <ecNumber>3.2.1.58</ecNumber>
    </recommendedName>
    <alternativeName>
        <fullName>Exo-1,3-beta-glucanase D</fullName>
    </alternativeName>
</protein>
<name>EXGD_ASPNC</name>
<organism>
    <name type="scientific">Aspergillus niger (strain ATCC MYA-4892 / CBS 513.88 / FGSC A1513)</name>
    <dbReference type="NCBI Taxonomy" id="425011"/>
    <lineage>
        <taxon>Eukaryota</taxon>
        <taxon>Fungi</taxon>
        <taxon>Dikarya</taxon>
        <taxon>Ascomycota</taxon>
        <taxon>Pezizomycotina</taxon>
        <taxon>Eurotiomycetes</taxon>
        <taxon>Eurotiomycetidae</taxon>
        <taxon>Eurotiales</taxon>
        <taxon>Aspergillaceae</taxon>
        <taxon>Aspergillus</taxon>
        <taxon>Aspergillus subgen. Circumdati</taxon>
    </lineage>
</organism>
<sequence length="830" mass="93303">MPGHSRSRDRLSPSSELDDADPVYSPSVYQREHYYNNDSLFDSADDDYTRTPRNVYSYETHDEYHDDDDDDDDVHEHDHDHEYDDKFEEPWVPLRAQVEGDQWREGFETAIPKEEDVTQAKEYQYQMSGALGDDGPPPLPSDALGRGKGKKRLDRETRRQRRKERLAAFFKHKNGSASAGLVSGDALAKLLGSQDGDEDCLSHLGTERADSMSQKNLEGGRQRKLPVLSEEPMMLRPFPAVAPTGQTQGRVVSGAQLEEGGPGMEMRHRGGGGPPAEGLLQKEGDWDGSTKGSSTSARPSFWKRYHKTFIFFAILIVLAAIAIPVGIIEARRLHGTSGGDNSSNSNLKGISRDSIPAYARGTYLDPFTWYDTTDFNVTFTNATVGGLSIMGLNSTWNDSAQANENVPPLNEKFPYGSQPIRGVNLGGWLSIEPFIVPSLFDTYTSSEGIIDEWTLSEKLGDSAASVIEKHYATFITEQDFADIRDAGLDHVRIQFSYWAIKTYDGDPYVPKIAWRYLLRAIEYCRKYGLRVNLDPHGIPGSQNGWNHSGRQGTIGWLNGTDGELNRQRSLEMHDQLSQFFAQDRYKNVVTIYGLVNEPLMLSLPVEKVLNWTTEATNLVQKNGIKAWVTVHDGFLNLDKWDKMLKTRPSNMMLDTHQYTVFNTGEIVLNHTRRVELICESWYSMIQQINITSTGWGPTICGEWSQADTDCAQYVNNVGRGTRWEGTFSLTDSTQYCPTASEGTCSCTQANAVPGVYSEGYKTFLQTYAEAQMSAFESAMGWFYWTWATESAAQWSYRTAWKNGYMPKKAYSPSFKCGDTIPSFGNLPEYY</sequence>
<accession>A2QX52</accession>